<feature type="chain" id="PRO_1000083868" description="Protein-export protein SecB">
    <location>
        <begin position="1"/>
        <end position="161"/>
    </location>
</feature>
<sequence length="161" mass="17641">MAEVANNEQQGPQFNIQRVYTKDISFETPNSPAVFQKEWNPEVKLDLDTRSNKLSDDVYEVVLSLTVTAKNGEETAFLCEVQQAGIFAIAGLTEQQLAHSLGAYCPNVLFPYAREAIGSLVSRGTFPQLNLAPVNFDALFAQYVQQRQAAAAEAPAEEANA</sequence>
<organism>
    <name type="scientific">Shewanella pealeana (strain ATCC 700345 / ANG-SQ1)</name>
    <dbReference type="NCBI Taxonomy" id="398579"/>
    <lineage>
        <taxon>Bacteria</taxon>
        <taxon>Pseudomonadati</taxon>
        <taxon>Pseudomonadota</taxon>
        <taxon>Gammaproteobacteria</taxon>
        <taxon>Alteromonadales</taxon>
        <taxon>Shewanellaceae</taxon>
        <taxon>Shewanella</taxon>
    </lineage>
</organism>
<keyword id="KW-0143">Chaperone</keyword>
<keyword id="KW-0963">Cytoplasm</keyword>
<keyword id="KW-0653">Protein transport</keyword>
<keyword id="KW-1185">Reference proteome</keyword>
<keyword id="KW-0811">Translocation</keyword>
<keyword id="KW-0813">Transport</keyword>
<comment type="function">
    <text evidence="1">One of the proteins required for the normal export of preproteins out of the cell cytoplasm. It is a molecular chaperone that binds to a subset of precursor proteins, maintaining them in a translocation-competent state. It also specifically binds to its receptor SecA.</text>
</comment>
<comment type="subunit">
    <text evidence="1">Homotetramer, a dimer of dimers. One homotetramer interacts with 1 SecA dimer.</text>
</comment>
<comment type="subcellular location">
    <subcellularLocation>
        <location evidence="1">Cytoplasm</location>
    </subcellularLocation>
</comment>
<comment type="similarity">
    <text evidence="1">Belongs to the SecB family.</text>
</comment>
<name>SECB_SHEPA</name>
<gene>
    <name evidence="1" type="primary">secB</name>
    <name type="ordered locus">Spea_4215</name>
</gene>
<accession>A8HAD8</accession>
<proteinExistence type="inferred from homology"/>
<dbReference type="EMBL" id="CP000851">
    <property type="protein sequence ID" value="ABV89525.1"/>
    <property type="molecule type" value="Genomic_DNA"/>
</dbReference>
<dbReference type="RefSeq" id="WP_012157402.1">
    <property type="nucleotide sequence ID" value="NC_009901.1"/>
</dbReference>
<dbReference type="SMR" id="A8HAD8"/>
<dbReference type="STRING" id="398579.Spea_4215"/>
<dbReference type="KEGG" id="spl:Spea_4215"/>
<dbReference type="eggNOG" id="COG1952">
    <property type="taxonomic scope" value="Bacteria"/>
</dbReference>
<dbReference type="HOGENOM" id="CLU_111574_1_0_6"/>
<dbReference type="OrthoDB" id="9795145at2"/>
<dbReference type="Proteomes" id="UP000002608">
    <property type="component" value="Chromosome"/>
</dbReference>
<dbReference type="GO" id="GO:0005737">
    <property type="term" value="C:cytoplasm"/>
    <property type="evidence" value="ECO:0007669"/>
    <property type="project" value="UniProtKB-SubCell"/>
</dbReference>
<dbReference type="GO" id="GO:0051082">
    <property type="term" value="F:unfolded protein binding"/>
    <property type="evidence" value="ECO:0007669"/>
    <property type="project" value="InterPro"/>
</dbReference>
<dbReference type="GO" id="GO:0006457">
    <property type="term" value="P:protein folding"/>
    <property type="evidence" value="ECO:0007669"/>
    <property type="project" value="UniProtKB-UniRule"/>
</dbReference>
<dbReference type="GO" id="GO:0051262">
    <property type="term" value="P:protein tetramerization"/>
    <property type="evidence" value="ECO:0007669"/>
    <property type="project" value="InterPro"/>
</dbReference>
<dbReference type="GO" id="GO:0015031">
    <property type="term" value="P:protein transport"/>
    <property type="evidence" value="ECO:0007669"/>
    <property type="project" value="UniProtKB-UniRule"/>
</dbReference>
<dbReference type="Gene3D" id="3.10.420.10">
    <property type="entry name" value="SecB-like"/>
    <property type="match status" value="1"/>
</dbReference>
<dbReference type="HAMAP" id="MF_00821">
    <property type="entry name" value="SecB"/>
    <property type="match status" value="1"/>
</dbReference>
<dbReference type="InterPro" id="IPR003708">
    <property type="entry name" value="SecB"/>
</dbReference>
<dbReference type="InterPro" id="IPR035958">
    <property type="entry name" value="SecB-like_sf"/>
</dbReference>
<dbReference type="NCBIfam" id="NF004393">
    <property type="entry name" value="PRK05751.1-4"/>
    <property type="match status" value="1"/>
</dbReference>
<dbReference type="NCBIfam" id="TIGR00809">
    <property type="entry name" value="secB"/>
    <property type="match status" value="1"/>
</dbReference>
<dbReference type="PANTHER" id="PTHR36918">
    <property type="match status" value="1"/>
</dbReference>
<dbReference type="PANTHER" id="PTHR36918:SF1">
    <property type="entry name" value="PROTEIN-EXPORT PROTEIN SECB"/>
    <property type="match status" value="1"/>
</dbReference>
<dbReference type="Pfam" id="PF02556">
    <property type="entry name" value="SecB"/>
    <property type="match status" value="1"/>
</dbReference>
<dbReference type="PRINTS" id="PR01594">
    <property type="entry name" value="SECBCHAPRONE"/>
</dbReference>
<dbReference type="SUPFAM" id="SSF54611">
    <property type="entry name" value="SecB-like"/>
    <property type="match status" value="1"/>
</dbReference>
<evidence type="ECO:0000255" key="1">
    <source>
        <dbReference type="HAMAP-Rule" id="MF_00821"/>
    </source>
</evidence>
<reference key="1">
    <citation type="submission" date="2007-10" db="EMBL/GenBank/DDBJ databases">
        <title>Complete sequence of Shewanella pealeana ATCC 700345.</title>
        <authorList>
            <consortium name="US DOE Joint Genome Institute"/>
            <person name="Copeland A."/>
            <person name="Lucas S."/>
            <person name="Lapidus A."/>
            <person name="Barry K."/>
            <person name="Glavina del Rio T."/>
            <person name="Dalin E."/>
            <person name="Tice H."/>
            <person name="Pitluck S."/>
            <person name="Chertkov O."/>
            <person name="Brettin T."/>
            <person name="Bruce D."/>
            <person name="Detter J.C."/>
            <person name="Han C."/>
            <person name="Schmutz J."/>
            <person name="Larimer F."/>
            <person name="Land M."/>
            <person name="Hauser L."/>
            <person name="Kyrpides N."/>
            <person name="Kim E."/>
            <person name="Zhao J.-S.Z."/>
            <person name="Manno D."/>
            <person name="Hawari J."/>
            <person name="Richardson P."/>
        </authorList>
    </citation>
    <scope>NUCLEOTIDE SEQUENCE [LARGE SCALE GENOMIC DNA]</scope>
    <source>
        <strain>ATCC 700345 / ANG-SQ1</strain>
    </source>
</reference>
<protein>
    <recommendedName>
        <fullName evidence="1">Protein-export protein SecB</fullName>
    </recommendedName>
</protein>